<organism>
    <name type="scientific">Ajellomyces dermatitidis (strain ER-3 / ATCC MYA-2586)</name>
    <name type="common">Blastomyces dermatitidis</name>
    <dbReference type="NCBI Taxonomy" id="559297"/>
    <lineage>
        <taxon>Eukaryota</taxon>
        <taxon>Fungi</taxon>
        <taxon>Dikarya</taxon>
        <taxon>Ascomycota</taxon>
        <taxon>Pezizomycotina</taxon>
        <taxon>Eurotiomycetes</taxon>
        <taxon>Eurotiomycetidae</taxon>
        <taxon>Onygenales</taxon>
        <taxon>Ajellomycetaceae</taxon>
        <taxon>Blastomyces</taxon>
    </lineage>
</organism>
<gene>
    <name type="ORF">BDCG_02812</name>
</gene>
<protein>
    <recommendedName>
        <fullName>Transcription activator of gluconeogenesis BDCG_02812</fullName>
    </recommendedName>
</protein>
<feature type="chain" id="PRO_0000406426" description="Transcription activator of gluconeogenesis BDCG_02812">
    <location>
        <begin position="1"/>
        <end position="779"/>
    </location>
</feature>
<feature type="DNA-binding region" description="Zn(2)-C6 fungal-type" evidence="2">
    <location>
        <begin position="77"/>
        <end position="105"/>
    </location>
</feature>
<feature type="region of interest" description="Disordered" evidence="3">
    <location>
        <begin position="1"/>
        <end position="70"/>
    </location>
</feature>
<feature type="region of interest" description="Disordered" evidence="3">
    <location>
        <begin position="135"/>
        <end position="163"/>
    </location>
</feature>
<feature type="region of interest" description="Disordered" evidence="3">
    <location>
        <begin position="202"/>
        <end position="239"/>
    </location>
</feature>
<feature type="region of interest" description="Disordered" evidence="3">
    <location>
        <begin position="285"/>
        <end position="344"/>
    </location>
</feature>
<feature type="region of interest" description="Disordered" evidence="3">
    <location>
        <begin position="401"/>
        <end position="421"/>
    </location>
</feature>
<feature type="region of interest" description="Disordered" evidence="3">
    <location>
        <begin position="559"/>
        <end position="590"/>
    </location>
</feature>
<feature type="region of interest" description="Disordered" evidence="3">
    <location>
        <begin position="655"/>
        <end position="732"/>
    </location>
</feature>
<feature type="compositionally biased region" description="Polar residues" evidence="3">
    <location>
        <begin position="25"/>
        <end position="61"/>
    </location>
</feature>
<feature type="compositionally biased region" description="Polar residues" evidence="3">
    <location>
        <begin position="202"/>
        <end position="226"/>
    </location>
</feature>
<feature type="compositionally biased region" description="Low complexity" evidence="3">
    <location>
        <begin position="227"/>
        <end position="238"/>
    </location>
</feature>
<feature type="compositionally biased region" description="Polar residues" evidence="3">
    <location>
        <begin position="291"/>
        <end position="322"/>
    </location>
</feature>
<feature type="compositionally biased region" description="Polar residues" evidence="3">
    <location>
        <begin position="333"/>
        <end position="344"/>
    </location>
</feature>
<feature type="compositionally biased region" description="Polar residues" evidence="3">
    <location>
        <begin position="401"/>
        <end position="416"/>
    </location>
</feature>
<feature type="compositionally biased region" description="Low complexity" evidence="3">
    <location>
        <begin position="560"/>
        <end position="572"/>
    </location>
</feature>
<feature type="compositionally biased region" description="Polar residues" evidence="3">
    <location>
        <begin position="573"/>
        <end position="586"/>
    </location>
</feature>
<feature type="compositionally biased region" description="Low complexity" evidence="3">
    <location>
        <begin position="672"/>
        <end position="719"/>
    </location>
</feature>
<feature type="compositionally biased region" description="Polar residues" evidence="3">
    <location>
        <begin position="720"/>
        <end position="729"/>
    </location>
</feature>
<evidence type="ECO:0000250" key="1"/>
<evidence type="ECO:0000255" key="2">
    <source>
        <dbReference type="PROSITE-ProRule" id="PRU00227"/>
    </source>
</evidence>
<evidence type="ECO:0000256" key="3">
    <source>
        <dbReference type="SAM" id="MobiDB-lite"/>
    </source>
</evidence>
<evidence type="ECO:0000305" key="4"/>
<reference key="1">
    <citation type="journal article" date="2015" name="PLoS Genet.">
        <title>The dynamic genome and transcriptome of the human fungal pathogen Blastomyces and close relative Emmonsia.</title>
        <authorList>
            <person name="Munoz J.F."/>
            <person name="Gauthier G.M."/>
            <person name="Desjardins C.A."/>
            <person name="Gallo J.E."/>
            <person name="Holder J."/>
            <person name="Sullivan T.D."/>
            <person name="Marty A.J."/>
            <person name="Carmen J.C."/>
            <person name="Chen Z."/>
            <person name="Ding L."/>
            <person name="Gujja S."/>
            <person name="Magrini V."/>
            <person name="Misas E."/>
            <person name="Mitreva M."/>
            <person name="Priest M."/>
            <person name="Saif S."/>
            <person name="Whiston E.A."/>
            <person name="Young S."/>
            <person name="Zeng Q."/>
            <person name="Goldman W.E."/>
            <person name="Mardis E.R."/>
            <person name="Taylor J.W."/>
            <person name="McEwen J.G."/>
            <person name="Clay O.K."/>
            <person name="Klein B.S."/>
            <person name="Cuomo C.A."/>
        </authorList>
    </citation>
    <scope>NUCLEOTIDE SEQUENCE [LARGE SCALE GENOMIC DNA]</scope>
    <source>
        <strain>ER-3 / ATCC MYA-2586</strain>
    </source>
</reference>
<keyword id="KW-0010">Activator</keyword>
<keyword id="KW-0238">DNA-binding</keyword>
<keyword id="KW-0312">Gluconeogenesis</keyword>
<keyword id="KW-0479">Metal-binding</keyword>
<keyword id="KW-0539">Nucleus</keyword>
<keyword id="KW-0804">Transcription</keyword>
<keyword id="KW-0805">Transcription regulation</keyword>
<keyword id="KW-0862">Zinc</keyword>
<accession>C5GF27</accession>
<dbReference type="EMBL" id="EQ999975">
    <property type="protein sequence ID" value="EEQ87692.1"/>
    <property type="molecule type" value="Genomic_DNA"/>
</dbReference>
<dbReference type="RefSeq" id="XP_045274974.1">
    <property type="nucleotide sequence ID" value="XM_045418376.1"/>
</dbReference>
<dbReference type="SMR" id="C5GF27"/>
<dbReference type="STRING" id="559297.C5GF27"/>
<dbReference type="GeneID" id="69025196"/>
<dbReference type="VEuPathDB" id="FungiDB:BDCG_02812"/>
<dbReference type="eggNOG" id="ENOG502R1M5">
    <property type="taxonomic scope" value="Eukaryota"/>
</dbReference>
<dbReference type="HOGENOM" id="CLU_010748_1_0_1"/>
<dbReference type="OMA" id="VMTTCKL"/>
<dbReference type="GO" id="GO:0005634">
    <property type="term" value="C:nucleus"/>
    <property type="evidence" value="ECO:0007669"/>
    <property type="project" value="UniProtKB-SubCell"/>
</dbReference>
<dbReference type="GO" id="GO:0000981">
    <property type="term" value="F:DNA-binding transcription factor activity, RNA polymerase II-specific"/>
    <property type="evidence" value="ECO:0007669"/>
    <property type="project" value="InterPro"/>
</dbReference>
<dbReference type="GO" id="GO:0000977">
    <property type="term" value="F:RNA polymerase II transcription regulatory region sequence-specific DNA binding"/>
    <property type="evidence" value="ECO:0007669"/>
    <property type="project" value="TreeGrafter"/>
</dbReference>
<dbReference type="GO" id="GO:0008270">
    <property type="term" value="F:zinc ion binding"/>
    <property type="evidence" value="ECO:0007669"/>
    <property type="project" value="InterPro"/>
</dbReference>
<dbReference type="GO" id="GO:0009267">
    <property type="term" value="P:cellular response to starvation"/>
    <property type="evidence" value="ECO:0007669"/>
    <property type="project" value="TreeGrafter"/>
</dbReference>
<dbReference type="GO" id="GO:0006094">
    <property type="term" value="P:gluconeogenesis"/>
    <property type="evidence" value="ECO:0007669"/>
    <property type="project" value="UniProtKB-KW"/>
</dbReference>
<dbReference type="CDD" id="cd00067">
    <property type="entry name" value="GAL4"/>
    <property type="match status" value="1"/>
</dbReference>
<dbReference type="Gene3D" id="4.10.240.10">
    <property type="entry name" value="Zn(2)-C6 fungal-type DNA-binding domain"/>
    <property type="match status" value="1"/>
</dbReference>
<dbReference type="InterPro" id="IPR050335">
    <property type="entry name" value="ERT1_acuK_gluconeogen_tf"/>
</dbReference>
<dbReference type="InterPro" id="IPR056751">
    <property type="entry name" value="PAS_13"/>
</dbReference>
<dbReference type="InterPro" id="IPR036864">
    <property type="entry name" value="Zn2-C6_fun-type_DNA-bd_sf"/>
</dbReference>
<dbReference type="InterPro" id="IPR001138">
    <property type="entry name" value="Zn2Cys6_DnaBD"/>
</dbReference>
<dbReference type="PANTHER" id="PTHR47659:SF1">
    <property type="entry name" value="TRANSCRIPTION ACTIVATOR OF GLUCONEOGENESIS ERT1"/>
    <property type="match status" value="1"/>
</dbReference>
<dbReference type="PANTHER" id="PTHR47659">
    <property type="entry name" value="ZN(II)2CYS6 TRANSCRIPTION FACTOR (EUROFUNG)-RELATED"/>
    <property type="match status" value="1"/>
</dbReference>
<dbReference type="Pfam" id="PF24990">
    <property type="entry name" value="PAS_13"/>
    <property type="match status" value="1"/>
</dbReference>
<dbReference type="SMART" id="SM00066">
    <property type="entry name" value="GAL4"/>
    <property type="match status" value="1"/>
</dbReference>
<dbReference type="SUPFAM" id="SSF57701">
    <property type="entry name" value="Zn2/Cys6 DNA-binding domain"/>
    <property type="match status" value="1"/>
</dbReference>
<dbReference type="PROSITE" id="PS50048">
    <property type="entry name" value="ZN2_CY6_FUNGAL_2"/>
    <property type="match status" value="1"/>
</dbReference>
<proteinExistence type="inferred from homology"/>
<comment type="function">
    <text evidence="1">Transcription factor which regulates nonfermentable carbon utilization. Activator of gluconeogenetic genes (By similarity).</text>
</comment>
<comment type="subcellular location">
    <subcellularLocation>
        <location evidence="2">Nucleus</location>
    </subcellularLocation>
</comment>
<comment type="similarity">
    <text evidence="4">Belongs to the ERT1/acuK family.</text>
</comment>
<sequence length="779" mass="83516">MTASTRNGSPSPSPAAPTATEQESKSMTTTPANPPETKSQTNGKGSGTAQSSQKPASTSANAKDPLRPRRKKAKRACFACQRAHLTCGDERPCQRCIKRGLQDACHDGVRKKAKYLHDAPNEALLPGIRGNYYNQANTTRNIPNQRGNASNSNSNKVSRQSVSSANFYTPQAARSYNVYVQAKSQQSHVRPAVMQDASMNPSVFHAQSPSSTQNFDLSSNPQTQNLSSAMSQTASSVSGQNQDPFGAAFFDPSHPALFNFDIASMNFGNRYGALEFGMLGHMATGAGDTPPSDSATQRGSIGRSSGTFTAQNFGDSANNQSPFLFGDPVLNDWNPTGQGQANPRNIYNQNAVAGQMGEQNPHAFAIESAPMNFASPSSTESPQMTTTTPFDEANANFSSRTNLMHPTNTPQQSRISTPGLKHQGLHVGVKRRYRSPSSIYESVKEPYSYTSGFHSLTAFIQRRFSPQKTLQIAKALASIRPSFIATTKTLNQDDLIFMEKCFQRTLWEYEDFINACGTPTIVCRRTGEIAAVGKEFSILTGWKKEVLLGKEPNLNVNTGSSLSSASSVRGSSTFTPRNNNTHNSIDPHTGMPTVGGGGASGRTQPVFLAELLDDDSVIEFYEDFAKLAFGDSRGSVMTTCKLLKYKTKEDSAALFHGKEETQQGGVDGSSGTGTTTSGDVATTTATGTSTSNGANANTNGNNTNPNDPSSAASSSASSALQGPQQSPRQTWGKRGIAGEAGMNQLGFRDGKVECSYCWTVKRDVFDIPMLIVMNFLPCI</sequence>
<name>ACUK_AJEDR</name>